<proteinExistence type="inferred from homology"/>
<comment type="function">
    <text evidence="1">Catalyzes the attachment of isoleucine to tRNA(Ile). As IleRS can inadvertently accommodate and process structurally similar amino acids such as valine, to avoid such errors it has two additional distinct tRNA(Ile)-dependent editing activities. One activity is designated as 'pretransfer' editing and involves the hydrolysis of activated Val-AMP. The other activity is designated 'posttransfer' editing and involves deacylation of mischarged Val-tRNA(Ile).</text>
</comment>
<comment type="catalytic activity">
    <reaction evidence="1">
        <text>tRNA(Ile) + L-isoleucine + ATP = L-isoleucyl-tRNA(Ile) + AMP + diphosphate</text>
        <dbReference type="Rhea" id="RHEA:11060"/>
        <dbReference type="Rhea" id="RHEA-COMP:9666"/>
        <dbReference type="Rhea" id="RHEA-COMP:9695"/>
        <dbReference type="ChEBI" id="CHEBI:30616"/>
        <dbReference type="ChEBI" id="CHEBI:33019"/>
        <dbReference type="ChEBI" id="CHEBI:58045"/>
        <dbReference type="ChEBI" id="CHEBI:78442"/>
        <dbReference type="ChEBI" id="CHEBI:78528"/>
        <dbReference type="ChEBI" id="CHEBI:456215"/>
        <dbReference type="EC" id="6.1.1.5"/>
    </reaction>
</comment>
<comment type="cofactor">
    <cofactor evidence="1">
        <name>Zn(2+)</name>
        <dbReference type="ChEBI" id="CHEBI:29105"/>
    </cofactor>
</comment>
<comment type="subunit">
    <text evidence="1">Monomer.</text>
</comment>
<comment type="subcellular location">
    <subcellularLocation>
        <location evidence="1">Cytoplasm</location>
    </subcellularLocation>
</comment>
<comment type="domain">
    <text evidence="1">IleRS has two distinct active sites: one for aminoacylation and one for editing. The misactivated valine is translocated from the active site to the editing site, which sterically excludes the correctly activated isoleucine. The single editing site contains two valyl binding pockets, one specific for each substrate (Val-AMP or Val-tRNA(Ile)).</text>
</comment>
<comment type="similarity">
    <text evidence="1">Belongs to the class-I aminoacyl-tRNA synthetase family. IleS type 2 subfamily.</text>
</comment>
<accession>A8GW18</accession>
<sequence length="1108" mass="127564">MTNTKYYPEVSSNADFATIEKEILKFWQDNNIFQKSIDIREGDAEFIFYDGPPFANGLPHYGHLLTGFIKDVYARYQTVRGKKVERRFGWDCHGLPAEMQSEKELGISGHLAITNFGIEKFNAHCRDSVMKYAGEWEQYVTRQARWVDFKNSYKTMDKNFMESVLWAFKELYNKGLLYESMRVMPYSWACETPLSNFETRLDNSYRERADKAVTVSFVLCHPVSKSTLDVIPWLDHGIQKTINNDSANCSMDPVDKPRYDTENFLGITANYKEYRILAWTTTTWTLPSNLALAVGSDIDYALVPKGDVCYIIAASSVSKYAKELELKGDEQFTIIKGSELQGLSYKPLFDYFKNHPNSFKIFAGDFVVEGDGTGVVHMAPGFGEDDQILCESKGIKLVCPVDNSGKFTKEIPDLEGLQVFDANDKIIIKLKEQGNWLKTEQYIHNYPHCWRTDTPLIYKAVPSWYVKVTEFKDRMVELNQQINWIPTHVKDNLFGKWLENARDWSISRNRFWGTPLPVWKSDDPKYPRIDVYGSIEELEKDFGVKITDLHRPFIDELTRANPDDPTGKSTMRRIEDVFDCWFESGSMPYGQAHYPFENKQWFEEHFPADFIVEYSAQTRGWFYTLMVLSTALFDRPPFLNCICHGVILDATGQKLSKRLNNYADPLELFDKYGSDALRVTMLSSNVVKGQELLIDKDGKMVFDTLRLFIKPIWNAYHFFTMYANADHIKGELNFTSENVLDVYILSKLKIAVEKIKESLDSFDTGTAYHAVSEFFEVLNNWYIRRSRARFWKSEKDADKQSAYNTLYTCLETMAIAMSSLVPLISEAIYLGLYCHPRKSGDPEKPECLDSRLCGNDNLSVHLCDYPDLSKFKINSELVDTMDTVLDICNHSLFIRSSENARVRQPLSSITIISKNNDKLKSFEDLIKDEINVKSVIYRDDLENYAVKKLSINFPLLGKRLPAKMKDIIAASKKNEWEVTSGSLIICNETLNSDEYKLILEPHSHIKGASSFAHNSSLLILDLELTPELIDEGIARDIVRFIQQARKNADFAITDRILIDINLPKITDIYGEFIKEQTLGKFAKDFIPDHISEIELDNHKLQLKIKKVN</sequence>
<reference key="1">
    <citation type="submission" date="2007-09" db="EMBL/GenBank/DDBJ databases">
        <title>Complete genome sequencing of Rickettsia bellii.</title>
        <authorList>
            <person name="Madan A."/>
            <person name="Lee H."/>
            <person name="Madan A."/>
            <person name="Yoon J.-G."/>
            <person name="Ryu G.-Y."/>
            <person name="Dasch G."/>
            <person name="Ereemeva M."/>
        </authorList>
    </citation>
    <scope>NUCLEOTIDE SEQUENCE [LARGE SCALE GENOMIC DNA]</scope>
    <source>
        <strain>OSU 85-389</strain>
    </source>
</reference>
<organism>
    <name type="scientific">Rickettsia bellii (strain OSU 85-389)</name>
    <dbReference type="NCBI Taxonomy" id="391896"/>
    <lineage>
        <taxon>Bacteria</taxon>
        <taxon>Pseudomonadati</taxon>
        <taxon>Pseudomonadota</taxon>
        <taxon>Alphaproteobacteria</taxon>
        <taxon>Rickettsiales</taxon>
        <taxon>Rickettsiaceae</taxon>
        <taxon>Rickettsieae</taxon>
        <taxon>Rickettsia</taxon>
        <taxon>belli group</taxon>
    </lineage>
</organism>
<evidence type="ECO:0000255" key="1">
    <source>
        <dbReference type="HAMAP-Rule" id="MF_02003"/>
    </source>
</evidence>
<protein>
    <recommendedName>
        <fullName evidence="1">Isoleucine--tRNA ligase</fullName>
        <ecNumber evidence="1">6.1.1.5</ecNumber>
    </recommendedName>
    <alternativeName>
        <fullName evidence="1">Isoleucyl-tRNA synthetase</fullName>
        <shortName evidence="1">IleRS</shortName>
    </alternativeName>
</protein>
<feature type="chain" id="PRO_1000022159" description="Isoleucine--tRNA ligase">
    <location>
        <begin position="1"/>
        <end position="1108"/>
    </location>
</feature>
<feature type="short sequence motif" description="'HIGH' region">
    <location>
        <begin position="53"/>
        <end position="63"/>
    </location>
</feature>
<feature type="short sequence motif" description="'KMSKS' region">
    <location>
        <begin position="654"/>
        <end position="658"/>
    </location>
</feature>
<feature type="binding site" evidence="1">
    <location>
        <position position="657"/>
    </location>
    <ligand>
        <name>ATP</name>
        <dbReference type="ChEBI" id="CHEBI:30616"/>
    </ligand>
</feature>
<dbReference type="EC" id="6.1.1.5" evidence="1"/>
<dbReference type="EMBL" id="CP000849">
    <property type="protein sequence ID" value="ABV79045.1"/>
    <property type="molecule type" value="Genomic_DNA"/>
</dbReference>
<dbReference type="RefSeq" id="WP_012151808.1">
    <property type="nucleotide sequence ID" value="NC_009883.1"/>
</dbReference>
<dbReference type="SMR" id="A8GW18"/>
<dbReference type="KEGG" id="rbo:A1I_03430"/>
<dbReference type="HOGENOM" id="CLU_001493_1_1_5"/>
<dbReference type="GO" id="GO:0005737">
    <property type="term" value="C:cytoplasm"/>
    <property type="evidence" value="ECO:0007669"/>
    <property type="project" value="UniProtKB-SubCell"/>
</dbReference>
<dbReference type="GO" id="GO:0002161">
    <property type="term" value="F:aminoacyl-tRNA deacylase activity"/>
    <property type="evidence" value="ECO:0007669"/>
    <property type="project" value="InterPro"/>
</dbReference>
<dbReference type="GO" id="GO:0005524">
    <property type="term" value="F:ATP binding"/>
    <property type="evidence" value="ECO:0007669"/>
    <property type="project" value="UniProtKB-UniRule"/>
</dbReference>
<dbReference type="GO" id="GO:0004822">
    <property type="term" value="F:isoleucine-tRNA ligase activity"/>
    <property type="evidence" value="ECO:0007669"/>
    <property type="project" value="UniProtKB-UniRule"/>
</dbReference>
<dbReference type="GO" id="GO:0000049">
    <property type="term" value="F:tRNA binding"/>
    <property type="evidence" value="ECO:0007669"/>
    <property type="project" value="InterPro"/>
</dbReference>
<dbReference type="GO" id="GO:0008270">
    <property type="term" value="F:zinc ion binding"/>
    <property type="evidence" value="ECO:0007669"/>
    <property type="project" value="UniProtKB-UniRule"/>
</dbReference>
<dbReference type="GO" id="GO:0006428">
    <property type="term" value="P:isoleucyl-tRNA aminoacylation"/>
    <property type="evidence" value="ECO:0007669"/>
    <property type="project" value="UniProtKB-UniRule"/>
</dbReference>
<dbReference type="CDD" id="cd07961">
    <property type="entry name" value="Anticodon_Ia_Ile_ABEc"/>
    <property type="match status" value="1"/>
</dbReference>
<dbReference type="CDD" id="cd00818">
    <property type="entry name" value="IleRS_core"/>
    <property type="match status" value="1"/>
</dbReference>
<dbReference type="FunFam" id="3.40.50.620:FF:000205">
    <property type="entry name" value="Isoleucine--tRNA ligase"/>
    <property type="match status" value="1"/>
</dbReference>
<dbReference type="FunFam" id="3.40.50.620:FF:000241">
    <property type="entry name" value="Isoleucine--tRNA ligase"/>
    <property type="match status" value="1"/>
</dbReference>
<dbReference type="Gene3D" id="3.40.50.620">
    <property type="entry name" value="HUPs"/>
    <property type="match status" value="2"/>
</dbReference>
<dbReference type="Gene3D" id="1.10.730.10">
    <property type="entry name" value="Isoleucyl-tRNA Synthetase, Domain 1"/>
    <property type="match status" value="1"/>
</dbReference>
<dbReference type="HAMAP" id="MF_02003">
    <property type="entry name" value="Ile_tRNA_synth_type2"/>
    <property type="match status" value="1"/>
</dbReference>
<dbReference type="InterPro" id="IPR001412">
    <property type="entry name" value="aa-tRNA-synth_I_CS"/>
</dbReference>
<dbReference type="InterPro" id="IPR002300">
    <property type="entry name" value="aa-tRNA-synth_Ia"/>
</dbReference>
<dbReference type="InterPro" id="IPR033709">
    <property type="entry name" value="Anticodon_Ile_ABEc"/>
</dbReference>
<dbReference type="InterPro" id="IPR002301">
    <property type="entry name" value="Ile-tRNA-ligase"/>
</dbReference>
<dbReference type="InterPro" id="IPR023586">
    <property type="entry name" value="Ile-tRNA-ligase_type2"/>
</dbReference>
<dbReference type="InterPro" id="IPR013155">
    <property type="entry name" value="M/V/L/I-tRNA-synth_anticd-bd"/>
</dbReference>
<dbReference type="InterPro" id="IPR014729">
    <property type="entry name" value="Rossmann-like_a/b/a_fold"/>
</dbReference>
<dbReference type="InterPro" id="IPR022439">
    <property type="entry name" value="RPE4"/>
</dbReference>
<dbReference type="InterPro" id="IPR009080">
    <property type="entry name" value="tRNAsynth_Ia_anticodon-bd"/>
</dbReference>
<dbReference type="InterPro" id="IPR009008">
    <property type="entry name" value="Val/Leu/Ile-tRNA-synth_edit"/>
</dbReference>
<dbReference type="NCBIfam" id="TIGR00392">
    <property type="entry name" value="ileS"/>
    <property type="match status" value="1"/>
</dbReference>
<dbReference type="NCBIfam" id="TIGR03777">
    <property type="entry name" value="RPE4"/>
    <property type="match status" value="1"/>
</dbReference>
<dbReference type="PANTHER" id="PTHR42780:SF1">
    <property type="entry name" value="ISOLEUCINE--TRNA LIGASE, CYTOPLASMIC"/>
    <property type="match status" value="1"/>
</dbReference>
<dbReference type="PANTHER" id="PTHR42780">
    <property type="entry name" value="SOLEUCYL-TRNA SYNTHETASE"/>
    <property type="match status" value="1"/>
</dbReference>
<dbReference type="Pfam" id="PF08264">
    <property type="entry name" value="Anticodon_1"/>
    <property type="match status" value="1"/>
</dbReference>
<dbReference type="Pfam" id="PF19302">
    <property type="entry name" value="DUF5915"/>
    <property type="match status" value="1"/>
</dbReference>
<dbReference type="Pfam" id="PF00133">
    <property type="entry name" value="tRNA-synt_1"/>
    <property type="match status" value="1"/>
</dbReference>
<dbReference type="PRINTS" id="PR00984">
    <property type="entry name" value="TRNASYNTHILE"/>
</dbReference>
<dbReference type="SUPFAM" id="SSF47323">
    <property type="entry name" value="Anticodon-binding domain of a subclass of class I aminoacyl-tRNA synthetases"/>
    <property type="match status" value="1"/>
</dbReference>
<dbReference type="SUPFAM" id="SSF52374">
    <property type="entry name" value="Nucleotidylyl transferase"/>
    <property type="match status" value="1"/>
</dbReference>
<dbReference type="SUPFAM" id="SSF50677">
    <property type="entry name" value="ValRS/IleRS/LeuRS editing domain"/>
    <property type="match status" value="1"/>
</dbReference>
<dbReference type="PROSITE" id="PS00178">
    <property type="entry name" value="AA_TRNA_LIGASE_I"/>
    <property type="match status" value="1"/>
</dbReference>
<name>SYI_RICB8</name>
<keyword id="KW-0030">Aminoacyl-tRNA synthetase</keyword>
<keyword id="KW-0067">ATP-binding</keyword>
<keyword id="KW-0963">Cytoplasm</keyword>
<keyword id="KW-0436">Ligase</keyword>
<keyword id="KW-0479">Metal-binding</keyword>
<keyword id="KW-0547">Nucleotide-binding</keyword>
<keyword id="KW-0648">Protein biosynthesis</keyword>
<keyword id="KW-0862">Zinc</keyword>
<gene>
    <name evidence="1" type="primary">ileS</name>
    <name type="ordered locus">A1I_03430</name>
</gene>